<organism>
    <name type="scientific">Nicotiana glutinosa</name>
    <name type="common">Tobacco</name>
    <dbReference type="NCBI Taxonomy" id="35889"/>
    <lineage>
        <taxon>Eukaryota</taxon>
        <taxon>Viridiplantae</taxon>
        <taxon>Streptophyta</taxon>
        <taxon>Embryophyta</taxon>
        <taxon>Tracheophyta</taxon>
        <taxon>Spermatophyta</taxon>
        <taxon>Magnoliopsida</taxon>
        <taxon>eudicotyledons</taxon>
        <taxon>Gunneridae</taxon>
        <taxon>Pentapetalae</taxon>
        <taxon>asterids</taxon>
        <taxon>lamiids</taxon>
        <taxon>Solanales</taxon>
        <taxon>Solanaceae</taxon>
        <taxon>Nicotianoideae</taxon>
        <taxon>Nicotianeae</taxon>
        <taxon>Nicotiana</taxon>
    </lineage>
</organism>
<reference key="1">
    <citation type="journal article" date="2001" name="Biochem. J.">
        <title>Identification of essential active-site residues in ornithine decarboxylase of Nicotiana glutinosa decarboxylating both L-ornithine and L-lysine.</title>
        <authorList>
            <person name="Lee Y.-S."/>
            <person name="Cho Y.-D."/>
        </authorList>
    </citation>
    <scope>NUCLEOTIDE SEQUENCE [MRNA]</scope>
    <scope>FUNCTION</scope>
    <scope>MUTAGENESIS OF LYS-95; CYS-96; CYS-338 AND CYS-377</scope>
    <scope>CATALYTIC ACTIVITY</scope>
    <scope>PATHWAY</scope>
    <scope>SUBUNIT</scope>
    <scope>BIOPHYSICOCHEMICAL PROPERTIES</scope>
    <scope>ACTIVITY REGULATION</scope>
</reference>
<keyword id="KW-0017">Alkaloid metabolism</keyword>
<keyword id="KW-0150">Chloroplast</keyword>
<keyword id="KW-0456">Lyase</keyword>
<keyword id="KW-0934">Plastid</keyword>
<keyword id="KW-0663">Pyridoxal phosphate</keyword>
<keyword id="KW-0809">Transit peptide</keyword>
<evidence type="ECO:0000250" key="1">
    <source>
        <dbReference type="UniProtKB" id="A0A1S4AUX8"/>
    </source>
</evidence>
<evidence type="ECO:0000250" key="2">
    <source>
        <dbReference type="UniProtKB" id="P00860"/>
    </source>
</evidence>
<evidence type="ECO:0000250" key="3">
    <source>
        <dbReference type="UniProtKB" id="P07805"/>
    </source>
</evidence>
<evidence type="ECO:0000250" key="4">
    <source>
        <dbReference type="UniProtKB" id="P11926"/>
    </source>
</evidence>
<evidence type="ECO:0000250" key="5">
    <source>
        <dbReference type="UniProtKB" id="P93351"/>
    </source>
</evidence>
<evidence type="ECO:0000255" key="6"/>
<evidence type="ECO:0000269" key="7">
    <source>
    </source>
</evidence>
<evidence type="ECO:0000303" key="8">
    <source>
    </source>
</evidence>
<evidence type="ECO:0000305" key="9"/>
<dbReference type="EC" id="4.1.1.17" evidence="4"/>
<dbReference type="EC" id="4.1.1.18" evidence="4"/>
<dbReference type="EMBL" id="AF323910">
    <property type="protein sequence ID" value="AAG45222.1"/>
    <property type="molecule type" value="mRNA"/>
</dbReference>
<dbReference type="SMR" id="Q9FPK5"/>
<dbReference type="BRENDA" id="4.1.1.17">
    <property type="organism ID" value="3636"/>
</dbReference>
<dbReference type="SABIO-RK" id="Q9FPK5"/>
<dbReference type="UniPathway" id="UPA00107"/>
<dbReference type="UniPathway" id="UPA00535">
    <property type="reaction ID" value="UER00288"/>
</dbReference>
<dbReference type="GO" id="GO:0009507">
    <property type="term" value="C:chloroplast"/>
    <property type="evidence" value="ECO:0007669"/>
    <property type="project" value="UniProtKB-SubCell"/>
</dbReference>
<dbReference type="GO" id="GO:0042802">
    <property type="term" value="F:identical protein binding"/>
    <property type="evidence" value="ECO:0000314"/>
    <property type="project" value="UniProtKB"/>
</dbReference>
<dbReference type="GO" id="GO:0008923">
    <property type="term" value="F:lysine decarboxylase activity"/>
    <property type="evidence" value="ECO:0000314"/>
    <property type="project" value="UniProtKB"/>
</dbReference>
<dbReference type="GO" id="GO:0004586">
    <property type="term" value="F:ornithine decarboxylase activity"/>
    <property type="evidence" value="ECO:0000314"/>
    <property type="project" value="UniProtKB"/>
</dbReference>
<dbReference type="GO" id="GO:0042803">
    <property type="term" value="F:protein homodimerization activity"/>
    <property type="evidence" value="ECO:0000314"/>
    <property type="project" value="UniProtKB"/>
</dbReference>
<dbReference type="GO" id="GO:0009820">
    <property type="term" value="P:alkaloid metabolic process"/>
    <property type="evidence" value="ECO:0007669"/>
    <property type="project" value="UniProtKB-KW"/>
</dbReference>
<dbReference type="GO" id="GO:0042179">
    <property type="term" value="P:nicotine biosynthetic process"/>
    <property type="evidence" value="ECO:0007669"/>
    <property type="project" value="UniProtKB-UniPathway"/>
</dbReference>
<dbReference type="GO" id="GO:0033387">
    <property type="term" value="P:putrescine biosynthetic process from arginine, via ornithine"/>
    <property type="evidence" value="ECO:0000314"/>
    <property type="project" value="UniProtKB"/>
</dbReference>
<dbReference type="CDD" id="cd00622">
    <property type="entry name" value="PLPDE_III_ODC"/>
    <property type="match status" value="1"/>
</dbReference>
<dbReference type="FunFam" id="3.20.20.10:FF:000005">
    <property type="entry name" value="Ornithine decarboxylase"/>
    <property type="match status" value="1"/>
</dbReference>
<dbReference type="Gene3D" id="3.20.20.10">
    <property type="entry name" value="Alanine racemase"/>
    <property type="match status" value="1"/>
</dbReference>
<dbReference type="Gene3D" id="2.40.37.10">
    <property type="entry name" value="Lyase, Ornithine Decarboxylase, Chain A, domain 1"/>
    <property type="match status" value="1"/>
</dbReference>
<dbReference type="InterPro" id="IPR009006">
    <property type="entry name" value="Ala_racemase/Decarboxylase_C"/>
</dbReference>
<dbReference type="InterPro" id="IPR022643">
    <property type="entry name" value="De-COase2_C"/>
</dbReference>
<dbReference type="InterPro" id="IPR022657">
    <property type="entry name" value="De-COase2_CS"/>
</dbReference>
<dbReference type="InterPro" id="IPR022644">
    <property type="entry name" value="De-COase2_N"/>
</dbReference>
<dbReference type="InterPro" id="IPR022653">
    <property type="entry name" value="De-COase2_pyr-phos_BS"/>
</dbReference>
<dbReference type="InterPro" id="IPR000183">
    <property type="entry name" value="Orn/DAP/Arg_de-COase"/>
</dbReference>
<dbReference type="InterPro" id="IPR002433">
    <property type="entry name" value="Orn_de-COase"/>
</dbReference>
<dbReference type="InterPro" id="IPR029066">
    <property type="entry name" value="PLP-binding_barrel"/>
</dbReference>
<dbReference type="PANTHER" id="PTHR11482">
    <property type="entry name" value="ARGININE/DIAMINOPIMELATE/ORNITHINE DECARBOXYLASE"/>
    <property type="match status" value="1"/>
</dbReference>
<dbReference type="PANTHER" id="PTHR11482:SF6">
    <property type="entry name" value="ORNITHINE DECARBOXYLASE 1-RELATED"/>
    <property type="match status" value="1"/>
</dbReference>
<dbReference type="Pfam" id="PF02784">
    <property type="entry name" value="Orn_Arg_deC_N"/>
    <property type="match status" value="1"/>
</dbReference>
<dbReference type="Pfam" id="PF00278">
    <property type="entry name" value="Orn_DAP_Arg_deC"/>
    <property type="match status" value="1"/>
</dbReference>
<dbReference type="PRINTS" id="PR01179">
    <property type="entry name" value="ODADCRBXLASE"/>
</dbReference>
<dbReference type="PRINTS" id="PR01182">
    <property type="entry name" value="ORNDCRBXLASE"/>
</dbReference>
<dbReference type="SUPFAM" id="SSF50621">
    <property type="entry name" value="Alanine racemase C-terminal domain-like"/>
    <property type="match status" value="1"/>
</dbReference>
<dbReference type="SUPFAM" id="SSF51419">
    <property type="entry name" value="PLP-binding barrel"/>
    <property type="match status" value="1"/>
</dbReference>
<dbReference type="PROSITE" id="PS00878">
    <property type="entry name" value="ODR_DC_2_1"/>
    <property type="match status" value="1"/>
</dbReference>
<dbReference type="PROSITE" id="PS00879">
    <property type="entry name" value="ODR_DC_2_2"/>
    <property type="match status" value="1"/>
</dbReference>
<protein>
    <recommendedName>
        <fullName evidence="8">Ornithine decarboxylase, chloroplastic</fullName>
        <ecNumber evidence="4">4.1.1.17</ecNumber>
    </recommendedName>
    <alternativeName>
        <fullName evidence="8">Lysine decarboxylase</fullName>
        <ecNumber evidence="4">4.1.1.18</ecNumber>
    </alternativeName>
</protein>
<comment type="function">
    <text evidence="4 5 7">Involved in the biosynthesis of pyridine alkaloid natural products, leading mainly to the production of anabasine, anatabine, nicotine and nornicotine, effective deterrents against herbivores with antiparasitic and pesticide properties (neurotoxins); nornicotine serves as the precursor in the synthesis of the carcinogen compound N'-nitrosonornicotine (NNN) (By similarity). Catalyzes the first and rate-limiting step of polyamine biosynthesis that converts ornithine into putrescine, which is the precursor for the polyamines, spermidine and spermine (PubMed:11736657). Can also use, with a lower efficiency, L-lysine as substrate to produce cadaverine (PubMed:11736657). Polyamines are essential for cell proliferation and are implicated in cellular processes, ranging from DNA replication to apoptosis (By similarity).</text>
</comment>
<comment type="catalytic activity">
    <reaction evidence="7">
        <text>L-lysine + H(+) = cadaverine + CO2</text>
        <dbReference type="Rhea" id="RHEA:22352"/>
        <dbReference type="ChEBI" id="CHEBI:15378"/>
        <dbReference type="ChEBI" id="CHEBI:16526"/>
        <dbReference type="ChEBI" id="CHEBI:32551"/>
        <dbReference type="ChEBI" id="CHEBI:58384"/>
        <dbReference type="EC" id="4.1.1.18"/>
    </reaction>
</comment>
<comment type="catalytic activity">
    <reaction evidence="7">
        <text>L-ornithine + H(+) = putrescine + CO2</text>
        <dbReference type="Rhea" id="RHEA:22964"/>
        <dbReference type="ChEBI" id="CHEBI:15378"/>
        <dbReference type="ChEBI" id="CHEBI:16526"/>
        <dbReference type="ChEBI" id="CHEBI:46911"/>
        <dbReference type="ChEBI" id="CHEBI:326268"/>
        <dbReference type="EC" id="4.1.1.17"/>
    </reaction>
</comment>
<comment type="cofactor">
    <cofactor evidence="4">
        <name>pyridoxal 5'-phosphate</name>
        <dbReference type="ChEBI" id="CHEBI:597326"/>
    </cofactor>
</comment>
<comment type="activity regulation">
    <text evidence="7">Repressed by alpha-difluoromethylornithine (DFMO), 5,5'-dithiobis-(2-nitrobenzoic acid) (DTNB) and salicylaldehyde.</text>
</comment>
<comment type="biophysicochemical properties">
    <kinetics>
        <KM evidence="7">562 uM for L-ornithine (at pH 8.0)</KM>
        <KM evidence="7">1592 uM for L-lysine (at pH 6.8)</KM>
        <Vmax evidence="7">12.54 nmol/min/mg enzyme with L-ornithine as substrate (at pH 8.0)</Vmax>
        <Vmax evidence="7">0.152 nmol/min/mg enzyme with L-lysine as substrate (at pH 6.8)</Vmax>
        <text evidence="7">kcat is 77.78 sec(-1) with L-ornithine as substrate (at pH 8.0) (PubMed:11736657). kcat is 0.236 sec(-1) with L-lysine as substrate (at pH 6.8) (PubMed:11736657).</text>
    </kinetics>
    <phDependence>
        <text evidence="7">Optimum pH is 8.0 with L-ornithine as substrate (PubMed:11736657). Optimum pH is 6.8 with L-lysine as substrate (PubMed:11736657).</text>
    </phDependence>
</comment>
<comment type="pathway">
    <text evidence="1">Alkaloid biosynthesis; nicotine biosynthesis.</text>
</comment>
<comment type="pathway">
    <text evidence="7">Amine and polyamine biosynthesis; putrescine biosynthesis via L-ornithine pathway; putrescine from L-ornithine: step 1/1.</text>
</comment>
<comment type="subunit">
    <text evidence="4 7">Homodimer (PubMed:11736657). Only the dimer is catalytically active, as the active sites are constructed of residues from both monomers (By similarity).</text>
</comment>
<comment type="subcellular location">
    <subcellularLocation>
        <location evidence="6">Plastid</location>
        <location evidence="6">Chloroplast</location>
    </subcellularLocation>
</comment>
<comment type="similarity">
    <text evidence="9">Belongs to the Orn/Lys/Arg decarboxylase class-II family.</text>
</comment>
<proteinExistence type="evidence at protein level"/>
<feature type="transit peptide" description="Chloroplast" evidence="6">
    <location>
        <begin position="1"/>
        <end status="unknown"/>
    </location>
</feature>
<feature type="chain" id="PRO_0000455778" description="Ornithine decarboxylase, chloroplastic">
    <location>
        <begin status="unknown"/>
        <end position="432"/>
    </location>
</feature>
<feature type="active site" description="Proton donor; shared with dimeric partner" evidence="4">
    <location>
        <position position="377"/>
    </location>
</feature>
<feature type="binding site" evidence="4">
    <location>
        <position position="227"/>
    </location>
    <ligand>
        <name>pyridoxal 5'-phosphate</name>
        <dbReference type="ChEBI" id="CHEBI:597326"/>
    </ligand>
</feature>
<feature type="binding site" evidence="4">
    <location>
        <position position="265"/>
    </location>
    <ligand>
        <name>pyridoxal 5'-phosphate</name>
        <dbReference type="ChEBI" id="CHEBI:597326"/>
    </ligand>
</feature>
<feature type="binding site" evidence="4">
    <location>
        <begin position="298"/>
        <end position="301"/>
    </location>
    <ligand>
        <name>pyridoxal 5'-phosphate</name>
        <dbReference type="ChEBI" id="CHEBI:597326"/>
    </ligand>
</feature>
<feature type="binding site" description="in other chain" evidence="3">
    <location>
        <begin position="341"/>
        <end position="342"/>
    </location>
    <ligand>
        <name>substrate</name>
        <note>ligand shared between dimeric partners</note>
    </ligand>
</feature>
<feature type="binding site" evidence="3">
    <location>
        <position position="378"/>
    </location>
    <ligand>
        <name>substrate</name>
        <note>ligand shared between dimeric partners</note>
    </ligand>
</feature>
<feature type="binding site" evidence="4">
    <location>
        <position position="406"/>
    </location>
    <ligand>
        <name>pyridoxal 5'-phosphate</name>
        <dbReference type="ChEBI" id="CHEBI:597326"/>
    </ligand>
</feature>
<feature type="site" description="Stacks against the aromatic ring of pyridoxal phosphate and stabilizes reaction intermediates" evidence="2">
    <location>
        <position position="224"/>
    </location>
</feature>
<feature type="modified residue" description="N6-(pyridoxal phosphate)lysine" evidence="4">
    <location>
        <position position="95"/>
    </location>
</feature>
<feature type="mutagenesis site" description="Loss of activity." evidence="7">
    <original>K</original>
    <variation>A</variation>
    <location>
        <position position="95"/>
    </location>
</feature>
<feature type="mutagenesis site" description="Almost unchanged activity." evidence="7">
    <original>C</original>
    <variation>A</variation>
    <location>
        <position position="96"/>
    </location>
</feature>
<feature type="mutagenesis site" description="Loss of activity." evidence="7">
    <original>C</original>
    <variation>A</variation>
    <location>
        <position position="338"/>
    </location>
</feature>
<feature type="mutagenesis site" description="Loss of activity." evidence="7">
    <original>C</original>
    <variation>A</variation>
    <location>
        <position position="377"/>
    </location>
</feature>
<accession>Q9FPK5</accession>
<name>ODC_NICGU</name>
<gene>
    <name evidence="8" type="primary">ODC</name>
</gene>
<sequence length="432" mass="46559">MAGQTIIVSGLNPAAILQSTIGGGASPTAAAAENGTRKVIPLSRDALQDFMLSIITQKLQDEKQPFYVLDLGEVVSLMDQWKSSLPNIRPFYAVKCNPEPSFLSILSAMGSNFDCASRAEIEYVLALGISPDRIVFANPCKPESDIIFAAKVGVNLTTYDSEDEVYKIRKHHPKSELLPRIKPMFDGNARCPMGPKYGALPEEVEPLLRAAQAARLTVSGVSFHIGSGDADSNAYLGAIAAAKEVFETAAKLGMSKMTVLDVGGGFTSGHQFTTAAVAVKSALKQHFDDEPELTIIAEPGRFFAETAFTLATTVIGKRVRGELREYWINDGLYGSMNCVLYDHATVNATPLAVLSNRTNVTCGGSKTFPTTVFGPTCDALDTVLRDYQLPELQVNDWLVFPNMGAYTKAAGSNFNGFNTSTIVTHLAYTYPS</sequence>